<comment type="subcellular location">
    <subcellularLocation>
        <location evidence="1">Cytoplasm</location>
    </subcellularLocation>
</comment>
<comment type="miscellaneous">
    <text evidence="2">Present with 2820 molecules/cell in log phase SD medium.</text>
</comment>
<reference key="1">
    <citation type="journal article" date="1997" name="Nature">
        <title>The nucleotide sequence of Saccharomyces cerevisiae chromosome XIV and its evolutionary implications.</title>
        <authorList>
            <person name="Philippsen P."/>
            <person name="Kleine K."/>
            <person name="Poehlmann R."/>
            <person name="Duesterhoeft A."/>
            <person name="Hamberg K."/>
            <person name="Hegemann J.H."/>
            <person name="Obermaier B."/>
            <person name="Urrestarazu L.A."/>
            <person name="Aert R."/>
            <person name="Albermann K."/>
            <person name="Altmann R."/>
            <person name="Andre B."/>
            <person name="Baladron V."/>
            <person name="Ballesta J.P.G."/>
            <person name="Becam A.-M."/>
            <person name="Beinhauer J.D."/>
            <person name="Boskovic J."/>
            <person name="Buitrago M.J."/>
            <person name="Bussereau F."/>
            <person name="Coster F."/>
            <person name="Crouzet M."/>
            <person name="D'Angelo M."/>
            <person name="Dal Pero F."/>
            <person name="De Antoni A."/>
            <person name="del Rey F."/>
            <person name="Doignon F."/>
            <person name="Domdey H."/>
            <person name="Dubois E."/>
            <person name="Fiedler T.A."/>
            <person name="Fleig U."/>
            <person name="Floeth M."/>
            <person name="Fritz C."/>
            <person name="Gaillardin C."/>
            <person name="Garcia-Cantalejo J.M."/>
            <person name="Glansdorff N."/>
            <person name="Goffeau A."/>
            <person name="Gueldener U."/>
            <person name="Herbert C.J."/>
            <person name="Heumann K."/>
            <person name="Heuss-Neitzel D."/>
            <person name="Hilbert H."/>
            <person name="Hinni K."/>
            <person name="Iraqui Houssaini I."/>
            <person name="Jacquet M."/>
            <person name="Jimenez A."/>
            <person name="Jonniaux J.-L."/>
            <person name="Karpfinger-Hartl L."/>
            <person name="Lanfranchi G."/>
            <person name="Lepingle A."/>
            <person name="Levesque H."/>
            <person name="Lyck R."/>
            <person name="Maftahi M."/>
            <person name="Mallet L."/>
            <person name="Maurer C.T.C."/>
            <person name="Messenguy F."/>
            <person name="Mewes H.-W."/>
            <person name="Moestl D."/>
            <person name="Nasr F."/>
            <person name="Nicaud J.-M."/>
            <person name="Niedenthal R.K."/>
            <person name="Pandolfo D."/>
            <person name="Pierard A."/>
            <person name="Piravandi E."/>
            <person name="Planta R.J."/>
            <person name="Pohl T.M."/>
            <person name="Purnelle B."/>
            <person name="Rebischung C."/>
            <person name="Remacha M.A."/>
            <person name="Revuelta J.L."/>
            <person name="Rinke M."/>
            <person name="Saiz J.E."/>
            <person name="Sartorello F."/>
            <person name="Scherens B."/>
            <person name="Sen-Gupta M."/>
            <person name="Soler-Mira A."/>
            <person name="Urbanus J.H.M."/>
            <person name="Valle G."/>
            <person name="Van Dyck L."/>
            <person name="Verhasselt P."/>
            <person name="Vierendeels F."/>
            <person name="Vissers S."/>
            <person name="Voet M."/>
            <person name="Volckaert G."/>
            <person name="Wach A."/>
            <person name="Wambutt R."/>
            <person name="Wedler H."/>
            <person name="Zollner A."/>
            <person name="Hani J."/>
        </authorList>
    </citation>
    <scope>NUCLEOTIDE SEQUENCE [LARGE SCALE GENOMIC DNA]</scope>
    <source>
        <strain>ATCC 204508 / S288c</strain>
    </source>
</reference>
<reference key="2">
    <citation type="journal article" date="2014" name="G3 (Bethesda)">
        <title>The reference genome sequence of Saccharomyces cerevisiae: Then and now.</title>
        <authorList>
            <person name="Engel S.R."/>
            <person name="Dietrich F.S."/>
            <person name="Fisk D.G."/>
            <person name="Binkley G."/>
            <person name="Balakrishnan R."/>
            <person name="Costanzo M.C."/>
            <person name="Dwight S.S."/>
            <person name="Hitz B.C."/>
            <person name="Karra K."/>
            <person name="Nash R.S."/>
            <person name="Weng S."/>
            <person name="Wong E.D."/>
            <person name="Lloyd P."/>
            <person name="Skrzypek M.S."/>
            <person name="Miyasato S.R."/>
            <person name="Simison M."/>
            <person name="Cherry J.M."/>
        </authorList>
    </citation>
    <scope>GENOME REANNOTATION</scope>
    <source>
        <strain>ATCC 204508 / S288c</strain>
    </source>
</reference>
<reference key="3">
    <citation type="journal article" date="1997" name="Nucleic Acids Res.">
        <title>Analysis of the yeast genome: identification of new non-coding and small ORF-containing RNAs.</title>
        <authorList>
            <person name="Olivas W.M."/>
            <person name="Muhlrad D."/>
            <person name="Parker R."/>
        </authorList>
    </citation>
    <scope>GENOME REANNOTATION</scope>
</reference>
<reference key="4">
    <citation type="journal article" date="2003" name="Nature">
        <title>Global analysis of protein localization in budding yeast.</title>
        <authorList>
            <person name="Huh W.-K."/>
            <person name="Falvo J.V."/>
            <person name="Gerke L.C."/>
            <person name="Carroll A.S."/>
            <person name="Howson R.W."/>
            <person name="Weissman J.S."/>
            <person name="O'Shea E.K."/>
        </authorList>
    </citation>
    <scope>SUBCELLULAR LOCATION [LARGE SCALE ANALYSIS]</scope>
</reference>
<reference key="5">
    <citation type="journal article" date="2003" name="Nature">
        <title>Global analysis of protein expression in yeast.</title>
        <authorList>
            <person name="Ghaemmaghami S."/>
            <person name="Huh W.-K."/>
            <person name="Bower K."/>
            <person name="Howson R.W."/>
            <person name="Belle A."/>
            <person name="Dephoure N."/>
            <person name="O'Shea E.K."/>
            <person name="Weissman J.S."/>
        </authorList>
    </citation>
    <scope>LEVEL OF PROTEIN EXPRESSION [LARGE SCALE ANALYSIS]</scope>
</reference>
<reference key="6">
    <citation type="journal article" date="2008" name="Mol. Cell. Proteomics">
        <title>A multidimensional chromatography technology for in-depth phosphoproteome analysis.</title>
        <authorList>
            <person name="Albuquerque C.P."/>
            <person name="Smolka M.B."/>
            <person name="Payne S.H."/>
            <person name="Bafna V."/>
            <person name="Eng J."/>
            <person name="Zhou H."/>
        </authorList>
    </citation>
    <scope>IDENTIFICATION BY MASS SPECTROMETRY [LARGE SCALE ANALYSIS]</scope>
</reference>
<reference key="7">
    <citation type="journal article" date="2012" name="Proc. Natl. Acad. Sci. U.S.A.">
        <title>N-terminal acetylome analyses and functional insights of the N-terminal acetyltransferase NatB.</title>
        <authorList>
            <person name="Van Damme P."/>
            <person name="Lasa M."/>
            <person name="Polevoda B."/>
            <person name="Gazquez C."/>
            <person name="Elosegui-Artola A."/>
            <person name="Kim D.S."/>
            <person name="De Juan-Pardo E."/>
            <person name="Demeyer K."/>
            <person name="Hole K."/>
            <person name="Larrea E."/>
            <person name="Timmerman E."/>
            <person name="Prieto J."/>
            <person name="Arnesen T."/>
            <person name="Sherman F."/>
            <person name="Gevaert K."/>
            <person name="Aldabe R."/>
        </authorList>
    </citation>
    <scope>IDENTIFICATION BY MASS SPECTROMETRY [LARGE SCALE ANALYSIS]</scope>
</reference>
<accession>Q3E841</accession>
<accession>D6W1L0</accession>
<sequence>MKSSIPITEVLPRAVGSLTFDENYNLLDTSGVAKVIEKSPIAEIIRKSNAELGRLGYSVYEDAQYIGHAFKKAGHFIVYFTPKNKNREGVVPPVGITN</sequence>
<organism>
    <name type="scientific">Saccharomyces cerevisiae (strain ATCC 204508 / S288c)</name>
    <name type="common">Baker's yeast</name>
    <dbReference type="NCBI Taxonomy" id="559292"/>
    <lineage>
        <taxon>Eukaryota</taxon>
        <taxon>Fungi</taxon>
        <taxon>Dikarya</taxon>
        <taxon>Ascomycota</taxon>
        <taxon>Saccharomycotina</taxon>
        <taxon>Saccharomycetes</taxon>
        <taxon>Saccharomycetales</taxon>
        <taxon>Saccharomycetaceae</taxon>
        <taxon>Saccharomyces</taxon>
    </lineage>
</organism>
<name>YN034_YEAST</name>
<proteinExistence type="evidence at protein level"/>
<evidence type="ECO:0000269" key="1">
    <source>
    </source>
</evidence>
<evidence type="ECO:0000269" key="2">
    <source>
    </source>
</evidence>
<evidence type="ECO:0007829" key="3">
    <source>
        <dbReference type="PDB" id="2GRG"/>
    </source>
</evidence>
<feature type="chain" id="PRO_0000247803" description="Uncharacterized protein YNR034W-A">
    <location>
        <begin position="1"/>
        <end position="98"/>
    </location>
</feature>
<feature type="helix" evidence="3">
    <location>
        <begin position="7"/>
        <end position="13"/>
    </location>
</feature>
<feature type="strand" evidence="3">
    <location>
        <begin position="15"/>
        <end position="20"/>
    </location>
</feature>
<feature type="strand" evidence="3">
    <location>
        <begin position="26"/>
        <end position="31"/>
    </location>
</feature>
<feature type="helix" evidence="3">
    <location>
        <begin position="32"/>
        <end position="34"/>
    </location>
</feature>
<feature type="helix" evidence="3">
    <location>
        <begin position="41"/>
        <end position="51"/>
    </location>
</feature>
<feature type="strand" evidence="3">
    <location>
        <begin position="53"/>
        <end position="61"/>
    </location>
</feature>
<feature type="strand" evidence="3">
    <location>
        <begin position="66"/>
        <end position="72"/>
    </location>
</feature>
<feature type="strand" evidence="3">
    <location>
        <begin position="75"/>
        <end position="82"/>
    </location>
</feature>
<keyword id="KW-0002">3D-structure</keyword>
<keyword id="KW-0963">Cytoplasm</keyword>
<keyword id="KW-1185">Reference proteome</keyword>
<dbReference type="EMBL" id="Z71649">
    <property type="status" value="NOT_ANNOTATED_CDS"/>
    <property type="molecule type" value="Genomic_DNA"/>
</dbReference>
<dbReference type="EMBL" id="BK006947">
    <property type="protein sequence ID" value="DAA10576.1"/>
    <property type="molecule type" value="Genomic_DNA"/>
</dbReference>
<dbReference type="PDB" id="2GRG">
    <property type="method" value="NMR"/>
    <property type="chains" value="A=1-98"/>
</dbReference>
<dbReference type="PDBsum" id="2GRG"/>
<dbReference type="BMRB" id="Q3E841"/>
<dbReference type="SMR" id="Q3E841"/>
<dbReference type="BioGRID" id="35860">
    <property type="interactions" value="28"/>
</dbReference>
<dbReference type="FunCoup" id="Q3E841">
    <property type="interactions" value="18"/>
</dbReference>
<dbReference type="IntAct" id="Q3E841">
    <property type="interactions" value="4"/>
</dbReference>
<dbReference type="STRING" id="4932.YNR034W-A"/>
<dbReference type="iPTMnet" id="Q3E841"/>
<dbReference type="PaxDb" id="4932-YNR034W-A"/>
<dbReference type="PeptideAtlas" id="Q3E841"/>
<dbReference type="TopDownProteomics" id="Q3E841"/>
<dbReference type="DNASU" id="855770"/>
<dbReference type="EnsemblFungi" id="YNR034W-A_mRNA">
    <property type="protein sequence ID" value="YNR034W-A"/>
    <property type="gene ID" value="YNR034W-A"/>
</dbReference>
<dbReference type="KEGG" id="sce:YNR034W-A"/>
<dbReference type="AGR" id="SGD:S000007525"/>
<dbReference type="SGD" id="S000007525">
    <property type="gene designation" value="YNR034W-A"/>
</dbReference>
<dbReference type="VEuPathDB" id="FungiDB:YNR034W-A"/>
<dbReference type="eggNOG" id="ENOG502SEHX">
    <property type="taxonomic scope" value="Eukaryota"/>
</dbReference>
<dbReference type="HOGENOM" id="CLU_173479_0_0_1"/>
<dbReference type="InParanoid" id="Q3E841"/>
<dbReference type="OMA" id="DSWHTND"/>
<dbReference type="OrthoDB" id="4057220at2759"/>
<dbReference type="BioCyc" id="YEAST:G3O-33406-MONOMER"/>
<dbReference type="BioGRID-ORCS" id="855770">
    <property type="hits" value="4 hits in 10 CRISPR screens"/>
</dbReference>
<dbReference type="EvolutionaryTrace" id="Q3E841"/>
<dbReference type="PRO" id="PR:Q3E841"/>
<dbReference type="Proteomes" id="UP000002311">
    <property type="component" value="Chromosome XIV"/>
</dbReference>
<dbReference type="RNAct" id="Q3E841">
    <property type="molecule type" value="protein"/>
</dbReference>
<dbReference type="GO" id="GO:0005737">
    <property type="term" value="C:cytoplasm"/>
    <property type="evidence" value="ECO:0007005"/>
    <property type="project" value="SGD"/>
</dbReference>
<dbReference type="GO" id="GO:0005829">
    <property type="term" value="C:cytosol"/>
    <property type="evidence" value="ECO:0000314"/>
    <property type="project" value="SGD"/>
</dbReference>
<dbReference type="FunFam" id="3.40.1840.10:FF:000001">
    <property type="entry name" value="YNR034W-A-like protein"/>
    <property type="match status" value="1"/>
</dbReference>
<dbReference type="Gene3D" id="3.40.1840.10">
    <property type="entry name" value="YNR034W-A-like"/>
    <property type="match status" value="1"/>
</dbReference>
<dbReference type="InterPro" id="IPR021591">
    <property type="entry name" value="YNR034W-A/EGO2"/>
</dbReference>
<dbReference type="InterPro" id="IPR035098">
    <property type="entry name" value="YNR034W-A/EGO2_sf"/>
</dbReference>
<dbReference type="Pfam" id="PF11503">
    <property type="entry name" value="YNR034W-A-like"/>
    <property type="match status" value="1"/>
</dbReference>
<dbReference type="SUPFAM" id="SSF160683">
    <property type="entry name" value="YNR034W-A-like"/>
    <property type="match status" value="1"/>
</dbReference>
<protein>
    <recommendedName>
        <fullName>Uncharacterized protein YNR034W-A</fullName>
    </recommendedName>
</protein>
<gene>
    <name type="ordered locus">YNR034W-A</name>
</gene>